<dbReference type="EC" id="5.6.2.2" evidence="1 2 4"/>
<dbReference type="EMBL" id="L27512">
    <property type="protein sequence ID" value="AAA83016.1"/>
    <property type="status" value="ALT_INIT"/>
    <property type="molecule type" value="Genomic_DNA"/>
</dbReference>
<dbReference type="EMBL" id="AL123456">
    <property type="protein sequence ID" value="CCP42727.1"/>
    <property type="molecule type" value="Genomic_DNA"/>
</dbReference>
<dbReference type="PIR" id="S44198">
    <property type="entry name" value="S44198"/>
</dbReference>
<dbReference type="RefSeq" id="NP_214519.2">
    <property type="nucleotide sequence ID" value="NC_000962.3"/>
</dbReference>
<dbReference type="RefSeq" id="WP_003917863.1">
    <property type="nucleotide sequence ID" value="NZ_NVQJ01000005.1"/>
</dbReference>
<dbReference type="PDB" id="2ZJT">
    <property type="method" value="X-ray"/>
    <property type="resolution" value="2.80 A"/>
    <property type="chains" value="A/B=448-675"/>
</dbReference>
<dbReference type="PDB" id="3IG0">
    <property type="method" value="X-ray"/>
    <property type="resolution" value="2.10 A"/>
    <property type="chains" value="A=448-675"/>
</dbReference>
<dbReference type="PDB" id="3M4I">
    <property type="method" value="X-ray"/>
    <property type="resolution" value="1.95 A"/>
    <property type="chains" value="A=448-675"/>
</dbReference>
<dbReference type="PDB" id="3ZKB">
    <property type="method" value="X-ray"/>
    <property type="resolution" value="2.90 A"/>
    <property type="chains" value="A/B/C/D/E/F/G/H/I/J/K/L/M/N/O/P=2-427"/>
</dbReference>
<dbReference type="PDB" id="3ZKD">
    <property type="method" value="X-ray"/>
    <property type="resolution" value="2.95 A"/>
    <property type="chains" value="A/B/C/D/E/F/G/H=2-427"/>
</dbReference>
<dbReference type="PDB" id="3ZM7">
    <property type="method" value="X-ray"/>
    <property type="resolution" value="3.30 A"/>
    <property type="chains" value="A/B/C/D/E/F=2-428"/>
</dbReference>
<dbReference type="PDB" id="5BS8">
    <property type="method" value="X-ray"/>
    <property type="resolution" value="2.40 A"/>
    <property type="chains" value="B/D=426-675"/>
</dbReference>
<dbReference type="PDB" id="5BTA">
    <property type="method" value="X-ray"/>
    <property type="resolution" value="2.55 A"/>
    <property type="chains" value="B/D=426-675"/>
</dbReference>
<dbReference type="PDB" id="5BTC">
    <property type="method" value="X-ray"/>
    <property type="resolution" value="2.55 A"/>
    <property type="chains" value="B/D=426-675"/>
</dbReference>
<dbReference type="PDB" id="5BTD">
    <property type="method" value="X-ray"/>
    <property type="resolution" value="2.50 A"/>
    <property type="chains" value="B/D=426-675"/>
</dbReference>
<dbReference type="PDB" id="5BTF">
    <property type="method" value="X-ray"/>
    <property type="resolution" value="2.61 A"/>
    <property type="chains" value="B/D=426-675"/>
</dbReference>
<dbReference type="PDB" id="5BTG">
    <property type="method" value="X-ray"/>
    <property type="resolution" value="2.50 A"/>
    <property type="chains" value="B/D=426-675"/>
</dbReference>
<dbReference type="PDB" id="5BTI">
    <property type="method" value="X-ray"/>
    <property type="resolution" value="2.50 A"/>
    <property type="chains" value="B/D=426-675"/>
</dbReference>
<dbReference type="PDB" id="5BTL">
    <property type="method" value="X-ray"/>
    <property type="resolution" value="2.50 A"/>
    <property type="chains" value="B/D=426-675"/>
</dbReference>
<dbReference type="PDB" id="5BTN">
    <property type="method" value="X-ray"/>
    <property type="resolution" value="2.50 A"/>
    <property type="chains" value="B/D=426-675"/>
</dbReference>
<dbReference type="PDB" id="6GAU">
    <property type="method" value="X-ray"/>
    <property type="resolution" value="3.30 A"/>
    <property type="chains" value="A/B=1-675"/>
</dbReference>
<dbReference type="PDB" id="6GAV">
    <property type="method" value="X-ray"/>
    <property type="resolution" value="2.60 A"/>
    <property type="chains" value="A/B=1-675"/>
</dbReference>
<dbReference type="PDB" id="7UGW">
    <property type="method" value="X-ray"/>
    <property type="resolution" value="3.00 A"/>
    <property type="chains" value="B/D=425-675"/>
</dbReference>
<dbReference type="PDB" id="9FOY">
    <property type="method" value="X-ray"/>
    <property type="resolution" value="2.80 A"/>
    <property type="chains" value="A/B=426-675"/>
</dbReference>
<dbReference type="PDBsum" id="2ZJT"/>
<dbReference type="PDBsum" id="3IG0"/>
<dbReference type="PDBsum" id="3M4I"/>
<dbReference type="PDBsum" id="3ZKB"/>
<dbReference type="PDBsum" id="3ZKD"/>
<dbReference type="PDBsum" id="3ZM7"/>
<dbReference type="PDBsum" id="5BS8"/>
<dbReference type="PDBsum" id="5BTA"/>
<dbReference type="PDBsum" id="5BTC"/>
<dbReference type="PDBsum" id="5BTD"/>
<dbReference type="PDBsum" id="5BTF"/>
<dbReference type="PDBsum" id="5BTG"/>
<dbReference type="PDBsum" id="5BTI"/>
<dbReference type="PDBsum" id="5BTL"/>
<dbReference type="PDBsum" id="5BTN"/>
<dbReference type="PDBsum" id="6GAU"/>
<dbReference type="PDBsum" id="6GAV"/>
<dbReference type="PDBsum" id="7UGW"/>
<dbReference type="PDBsum" id="9FOY"/>
<dbReference type="SMR" id="P9WG45"/>
<dbReference type="FunCoup" id="P9WG45">
    <property type="interactions" value="169"/>
</dbReference>
<dbReference type="STRING" id="83332.Rv0005"/>
<dbReference type="BindingDB" id="P9WG45"/>
<dbReference type="ChEMBL" id="CHEMBL3430898"/>
<dbReference type="PaxDb" id="83332-Rv0005"/>
<dbReference type="DNASU" id="887081"/>
<dbReference type="GeneID" id="45423962"/>
<dbReference type="GeneID" id="887081"/>
<dbReference type="KEGG" id="mtu:Rv0005"/>
<dbReference type="KEGG" id="mtv:RVBD_0005"/>
<dbReference type="TubercuList" id="Rv0005"/>
<dbReference type="eggNOG" id="COG0187">
    <property type="taxonomic scope" value="Bacteria"/>
</dbReference>
<dbReference type="InParanoid" id="P9WG45"/>
<dbReference type="OrthoDB" id="9802808at2"/>
<dbReference type="BRENDA" id="5.6.2.2">
    <property type="organism ID" value="3445"/>
</dbReference>
<dbReference type="EvolutionaryTrace" id="P9WG45"/>
<dbReference type="Proteomes" id="UP000001584">
    <property type="component" value="Chromosome"/>
</dbReference>
<dbReference type="GO" id="GO:0005694">
    <property type="term" value="C:chromosome"/>
    <property type="evidence" value="ECO:0007669"/>
    <property type="project" value="InterPro"/>
</dbReference>
<dbReference type="GO" id="GO:0005737">
    <property type="term" value="C:cytoplasm"/>
    <property type="evidence" value="ECO:0007669"/>
    <property type="project" value="UniProtKB-SubCell"/>
</dbReference>
<dbReference type="GO" id="GO:0009274">
    <property type="term" value="C:peptidoglycan-based cell wall"/>
    <property type="evidence" value="ECO:0007005"/>
    <property type="project" value="MTBBASE"/>
</dbReference>
<dbReference type="GO" id="GO:0005886">
    <property type="term" value="C:plasma membrane"/>
    <property type="evidence" value="ECO:0007005"/>
    <property type="project" value="MTBBASE"/>
</dbReference>
<dbReference type="GO" id="GO:0005524">
    <property type="term" value="F:ATP binding"/>
    <property type="evidence" value="ECO:0000314"/>
    <property type="project" value="MTBBASE"/>
</dbReference>
<dbReference type="GO" id="GO:0003677">
    <property type="term" value="F:DNA binding"/>
    <property type="evidence" value="ECO:0007669"/>
    <property type="project" value="UniProtKB-KW"/>
</dbReference>
<dbReference type="GO" id="GO:0034335">
    <property type="term" value="F:DNA negative supercoiling activity"/>
    <property type="evidence" value="ECO:0000314"/>
    <property type="project" value="UniProtKB"/>
</dbReference>
<dbReference type="GO" id="GO:0003918">
    <property type="term" value="F:DNA topoisomerase type II (double strand cut, ATP-hydrolyzing) activity"/>
    <property type="evidence" value="ECO:0000314"/>
    <property type="project" value="MTBBASE"/>
</dbReference>
<dbReference type="GO" id="GO:0000287">
    <property type="term" value="F:magnesium ion binding"/>
    <property type="evidence" value="ECO:0000314"/>
    <property type="project" value="MTBBASE"/>
</dbReference>
<dbReference type="GO" id="GO:0006265">
    <property type="term" value="P:DNA topological change"/>
    <property type="evidence" value="ECO:0007669"/>
    <property type="project" value="UniProtKB-UniRule"/>
</dbReference>
<dbReference type="GO" id="GO:0006261">
    <property type="term" value="P:DNA-templated DNA replication"/>
    <property type="evidence" value="ECO:0007669"/>
    <property type="project" value="UniProtKB-UniRule"/>
</dbReference>
<dbReference type="GO" id="GO:0046677">
    <property type="term" value="P:response to antibiotic"/>
    <property type="evidence" value="ECO:0007669"/>
    <property type="project" value="UniProtKB-KW"/>
</dbReference>
<dbReference type="CDD" id="cd16928">
    <property type="entry name" value="HATPase_GyrB-like"/>
    <property type="match status" value="1"/>
</dbReference>
<dbReference type="CDD" id="cd00822">
    <property type="entry name" value="TopoII_Trans_DNA_gyrase"/>
    <property type="match status" value="1"/>
</dbReference>
<dbReference type="CDD" id="cd03366">
    <property type="entry name" value="TOPRIM_TopoIIA_GyrB"/>
    <property type="match status" value="1"/>
</dbReference>
<dbReference type="FunFam" id="3.30.230.10:FF:000005">
    <property type="entry name" value="DNA gyrase subunit B"/>
    <property type="match status" value="1"/>
</dbReference>
<dbReference type="FunFam" id="3.30.565.10:FF:000002">
    <property type="entry name" value="DNA gyrase subunit B"/>
    <property type="match status" value="1"/>
</dbReference>
<dbReference type="FunFam" id="3.40.50.670:FF:000002">
    <property type="entry name" value="DNA gyrase subunit B"/>
    <property type="match status" value="1"/>
</dbReference>
<dbReference type="Gene3D" id="3.30.230.10">
    <property type="match status" value="1"/>
</dbReference>
<dbReference type="Gene3D" id="3.40.50.670">
    <property type="match status" value="1"/>
</dbReference>
<dbReference type="Gene3D" id="3.30.565.10">
    <property type="entry name" value="Histidine kinase-like ATPase, C-terminal domain"/>
    <property type="match status" value="1"/>
</dbReference>
<dbReference type="HAMAP" id="MF_01898">
    <property type="entry name" value="GyrB"/>
    <property type="match status" value="1"/>
</dbReference>
<dbReference type="InterPro" id="IPR002288">
    <property type="entry name" value="DNA_gyrase_B_C"/>
</dbReference>
<dbReference type="InterPro" id="IPR011557">
    <property type="entry name" value="GyrB"/>
</dbReference>
<dbReference type="InterPro" id="IPR036890">
    <property type="entry name" value="HATPase_C_sf"/>
</dbReference>
<dbReference type="InterPro" id="IPR020568">
    <property type="entry name" value="Ribosomal_Su5_D2-typ_SF"/>
</dbReference>
<dbReference type="InterPro" id="IPR014721">
    <property type="entry name" value="Ribsml_uS5_D2-typ_fold_subgr"/>
</dbReference>
<dbReference type="InterPro" id="IPR001241">
    <property type="entry name" value="Topo_IIA"/>
</dbReference>
<dbReference type="InterPro" id="IPR013760">
    <property type="entry name" value="Topo_IIA-like_dom_sf"/>
</dbReference>
<dbReference type="InterPro" id="IPR000565">
    <property type="entry name" value="Topo_IIA_B"/>
</dbReference>
<dbReference type="InterPro" id="IPR013759">
    <property type="entry name" value="Topo_IIA_B_C"/>
</dbReference>
<dbReference type="InterPro" id="IPR013506">
    <property type="entry name" value="Topo_IIA_bsu_dom2"/>
</dbReference>
<dbReference type="InterPro" id="IPR018522">
    <property type="entry name" value="TopoIIA_CS"/>
</dbReference>
<dbReference type="InterPro" id="IPR006171">
    <property type="entry name" value="TOPRIM_dom"/>
</dbReference>
<dbReference type="InterPro" id="IPR034160">
    <property type="entry name" value="TOPRIM_GyrB"/>
</dbReference>
<dbReference type="NCBIfam" id="TIGR01059">
    <property type="entry name" value="gyrB"/>
    <property type="match status" value="1"/>
</dbReference>
<dbReference type="NCBIfam" id="NF004189">
    <property type="entry name" value="PRK05644.1"/>
    <property type="match status" value="1"/>
</dbReference>
<dbReference type="PANTHER" id="PTHR45866:SF1">
    <property type="entry name" value="DNA GYRASE SUBUNIT B, MITOCHONDRIAL"/>
    <property type="match status" value="1"/>
</dbReference>
<dbReference type="PANTHER" id="PTHR45866">
    <property type="entry name" value="DNA GYRASE/TOPOISOMERASE SUBUNIT B"/>
    <property type="match status" value="1"/>
</dbReference>
<dbReference type="Pfam" id="PF00204">
    <property type="entry name" value="DNA_gyraseB"/>
    <property type="match status" value="1"/>
</dbReference>
<dbReference type="Pfam" id="PF00986">
    <property type="entry name" value="DNA_gyraseB_C"/>
    <property type="match status" value="1"/>
</dbReference>
<dbReference type="Pfam" id="PF02518">
    <property type="entry name" value="HATPase_c"/>
    <property type="match status" value="1"/>
</dbReference>
<dbReference type="Pfam" id="PF01751">
    <property type="entry name" value="Toprim"/>
    <property type="match status" value="1"/>
</dbReference>
<dbReference type="PRINTS" id="PR01159">
    <property type="entry name" value="DNAGYRASEB"/>
</dbReference>
<dbReference type="PRINTS" id="PR00418">
    <property type="entry name" value="TPI2FAMILY"/>
</dbReference>
<dbReference type="SMART" id="SM00387">
    <property type="entry name" value="HATPase_c"/>
    <property type="match status" value="1"/>
</dbReference>
<dbReference type="SMART" id="SM00433">
    <property type="entry name" value="TOP2c"/>
    <property type="match status" value="1"/>
</dbReference>
<dbReference type="SUPFAM" id="SSF55874">
    <property type="entry name" value="ATPase domain of HSP90 chaperone/DNA topoisomerase II/histidine kinase"/>
    <property type="match status" value="1"/>
</dbReference>
<dbReference type="SUPFAM" id="SSF54211">
    <property type="entry name" value="Ribosomal protein S5 domain 2-like"/>
    <property type="match status" value="1"/>
</dbReference>
<dbReference type="SUPFAM" id="SSF56719">
    <property type="entry name" value="Type II DNA topoisomerase"/>
    <property type="match status" value="1"/>
</dbReference>
<dbReference type="PROSITE" id="PS00177">
    <property type="entry name" value="TOPOISOMERASE_II"/>
    <property type="match status" value="1"/>
</dbReference>
<dbReference type="PROSITE" id="PS50880">
    <property type="entry name" value="TOPRIM"/>
    <property type="match status" value="1"/>
</dbReference>
<organism>
    <name type="scientific">Mycobacterium tuberculosis (strain ATCC 25618 / H37Rv)</name>
    <dbReference type="NCBI Taxonomy" id="83332"/>
    <lineage>
        <taxon>Bacteria</taxon>
        <taxon>Bacillati</taxon>
        <taxon>Actinomycetota</taxon>
        <taxon>Actinomycetes</taxon>
        <taxon>Mycobacteriales</taxon>
        <taxon>Mycobacteriaceae</taxon>
        <taxon>Mycobacterium</taxon>
        <taxon>Mycobacterium tuberculosis complex</taxon>
    </lineage>
</organism>
<feature type="chain" id="PRO_0000145325" description="DNA gyrase subunit B">
    <location>
        <begin position="1"/>
        <end position="675"/>
    </location>
</feature>
<feature type="domain" description="Toprim" evidence="1">
    <location>
        <begin position="453"/>
        <end position="567"/>
    </location>
</feature>
<feature type="binding site" evidence="13">
    <location>
        <position position="12"/>
    </location>
    <ligand>
        <name>ATP</name>
        <dbReference type="ChEBI" id="CHEBI:30616"/>
    </ligand>
</feature>
<feature type="binding site" evidence="13">
    <location>
        <position position="52"/>
    </location>
    <ligand>
        <name>ATP</name>
        <dbReference type="ChEBI" id="CHEBI:30616"/>
    </ligand>
</feature>
<feature type="binding site" evidence="13">
    <location>
        <position position="79"/>
    </location>
    <ligand>
        <name>ATP</name>
        <dbReference type="ChEBI" id="CHEBI:30616"/>
    </ligand>
</feature>
<feature type="binding site" evidence="13">
    <location>
        <position position="83"/>
    </location>
    <ligand>
        <name>ATP</name>
        <dbReference type="ChEBI" id="CHEBI:30616"/>
    </ligand>
</feature>
<feature type="binding site" evidence="13">
    <location>
        <begin position="107"/>
        <end position="108"/>
    </location>
    <ligand>
        <name>ATP</name>
        <dbReference type="ChEBI" id="CHEBI:30616"/>
    </ligand>
</feature>
<feature type="binding site" evidence="13">
    <location>
        <position position="114"/>
    </location>
    <ligand>
        <name>ATP</name>
        <dbReference type="ChEBI" id="CHEBI:30616"/>
    </ligand>
</feature>
<feature type="binding site" evidence="13">
    <location>
        <begin position="120"/>
        <end position="125"/>
    </location>
    <ligand>
        <name>ATP</name>
        <dbReference type="ChEBI" id="CHEBI:30616"/>
    </ligand>
</feature>
<feature type="binding site" evidence="13">
    <location>
        <position position="169"/>
    </location>
    <ligand>
        <name>ATP</name>
        <dbReference type="ChEBI" id="CHEBI:30616"/>
    </ligand>
</feature>
<feature type="binding site" evidence="13">
    <location>
        <begin position="370"/>
        <end position="372"/>
    </location>
    <ligand>
        <name>ATP</name>
        <dbReference type="ChEBI" id="CHEBI:30616"/>
    </ligand>
</feature>
<feature type="binding site" evidence="1">
    <location>
        <position position="459"/>
    </location>
    <ligand>
        <name>Mg(2+)</name>
        <dbReference type="ChEBI" id="CHEBI:18420"/>
        <label>1</label>
        <note>catalytic</note>
    </ligand>
</feature>
<feature type="binding site" evidence="1">
    <location>
        <position position="532"/>
    </location>
    <ligand>
        <name>Mg(2+)</name>
        <dbReference type="ChEBI" id="CHEBI:18420"/>
        <label>1</label>
        <note>catalytic</note>
    </ligand>
</feature>
<feature type="binding site" evidence="1">
    <location>
        <position position="532"/>
    </location>
    <ligand>
        <name>Mg(2+)</name>
        <dbReference type="ChEBI" id="CHEBI:18420"/>
        <label>2</label>
    </ligand>
</feature>
<feature type="binding site" evidence="1">
    <location>
        <position position="534"/>
    </location>
    <ligand>
        <name>Mg(2+)</name>
        <dbReference type="ChEBI" id="CHEBI:18420"/>
        <label>2</label>
    </ligand>
</feature>
<feature type="site" description="Interaction with DNA" evidence="1">
    <location>
        <position position="484"/>
    </location>
</feature>
<feature type="site" description="Interaction with DNA" evidence="1">
    <location>
        <position position="487"/>
    </location>
</feature>
<feature type="mutagenesis site" description="Increased resistance to aminopyrazinamides, however genome not sequenced." evidence="11">
    <original>G</original>
    <variation>S</variation>
    <location>
        <position position="157"/>
    </location>
</feature>
<feature type="mutagenesis site" description="Increased resistance to pyrrolamides and novobiocin, however genome not sequenced." evidence="14">
    <original>S</original>
    <variation>A</variation>
    <location>
        <position position="169"/>
    </location>
</feature>
<feature type="mutagenesis site" description="No supercoiling activity." evidence="3">
    <original>D</original>
    <variation>H</variation>
    <location>
        <position position="472"/>
    </location>
</feature>
<feature type="mutagenesis site" description="Increased susceptibility to fluoroquinolones, half supercoiling activity, no fluoroquinolone-induced DNA cleavage (makes sequence more like E.coli)." evidence="5">
    <original>R</original>
    <variation>K</variation>
    <location>
        <position position="482"/>
    </location>
</feature>
<feature type="mutagenesis site" description="17-fold increased resistance to fluoroquinolones, slightly increased DNA cleavage in absence of drugs." evidence="3">
    <original>N</original>
    <variation>D</variation>
    <location>
        <position position="499"/>
    </location>
</feature>
<feature type="mutagenesis site" description="37% supercoiling, 54% decatenation, 126% DNA cleavage in presence of norfloxacin." evidence="7">
    <original>D</original>
    <variation>A</variation>
    <location>
        <position position="577"/>
    </location>
</feature>
<feature type="mutagenesis site" description="&lt;2% supercoiling, 4% decatenation." evidence="7">
    <original>D</original>
    <variation>R</variation>
    <location>
        <position position="577"/>
    </location>
</feature>
<feature type="mutagenesis site" description="&lt;3% supercoiling, 18% decatenation, 75% DNA cleavage in presence of norfloxacin." evidence="7">
    <original>ELWETTMD</original>
    <variation>ALWETTMA</variation>
    <location>
        <begin position="620"/>
        <end position="627"/>
    </location>
</feature>
<feature type="mutagenesis site" description="15% supercoiling, 19% decatenation, 143% DNA cleavage in presence of norfloxacin." evidence="7">
    <original>E</original>
    <variation>A</variation>
    <location>
        <position position="620"/>
    </location>
</feature>
<feature type="mutagenesis site" description="10% supercoiling, 7% decatenation." evidence="7">
    <original>E</original>
    <variation>R</variation>
    <location>
        <position position="620"/>
    </location>
</feature>
<feature type="mutagenesis site" description="18% supercoiling, 11% decatenation, 131% DNA cleavage in presence of norfloxacin." evidence="7">
    <original>E</original>
    <variation>A</variation>
    <location>
        <position position="623"/>
    </location>
</feature>
<feature type="mutagenesis site" description="&lt;2% supercoiling, 2% decatenation." evidence="7">
    <original>E</original>
    <variation>R</variation>
    <location>
        <position position="623"/>
    </location>
</feature>
<feature type="mutagenesis site" description="13% supercoiling, 10% decatenation, 42% DNA cleavage in presence of norfloxacin." evidence="7">
    <original>D</original>
    <variation>A</variation>
    <location>
        <position position="627"/>
    </location>
</feature>
<feature type="mutagenesis site" description="&lt;2% supercoiling, 3% decatenation." evidence="7">
    <original>D</original>
    <variation>R</variation>
    <location>
        <position position="627"/>
    </location>
</feature>
<feature type="sequence conflict" description="In Ref. 1; AAA83016." evidence="15" ref="1">
    <original>MQ</original>
    <variation>IE</variation>
    <location>
        <begin position="291"/>
        <end position="292"/>
    </location>
</feature>
<feature type="helix" evidence="21">
    <location>
        <begin position="14"/>
        <end position="16"/>
    </location>
</feature>
<feature type="turn" evidence="25">
    <location>
        <begin position="26"/>
        <end position="28"/>
    </location>
</feature>
<feature type="helix" evidence="25">
    <location>
        <begin position="30"/>
        <end position="34"/>
    </location>
</feature>
<feature type="helix" evidence="25">
    <location>
        <begin position="39"/>
        <end position="58"/>
    </location>
</feature>
<feature type="strand" evidence="25">
    <location>
        <begin position="64"/>
        <end position="69"/>
    </location>
</feature>
<feature type="strand" evidence="25">
    <location>
        <begin position="73"/>
        <end position="79"/>
    </location>
</feature>
<feature type="strand" evidence="25">
    <location>
        <begin position="90"/>
        <end position="94"/>
    </location>
</feature>
<feature type="helix" evidence="25">
    <location>
        <begin position="95"/>
        <end position="101"/>
    </location>
</feature>
<feature type="strand" evidence="21">
    <location>
        <begin position="105"/>
        <end position="107"/>
    </location>
</feature>
<feature type="strand" evidence="21">
    <location>
        <begin position="109"/>
        <end position="113"/>
    </location>
</feature>
<feature type="helix" evidence="25">
    <location>
        <begin position="125"/>
        <end position="130"/>
    </location>
</feature>
<feature type="strand" evidence="25">
    <location>
        <begin position="132"/>
        <end position="141"/>
    </location>
</feature>
<feature type="strand" evidence="25">
    <location>
        <begin position="144"/>
        <end position="151"/>
    </location>
</feature>
<feature type="strand" evidence="21">
    <location>
        <begin position="159"/>
        <end position="163"/>
    </location>
</feature>
<feature type="strand" evidence="25">
    <location>
        <begin position="168"/>
        <end position="175"/>
    </location>
</feature>
<feature type="turn" evidence="25">
    <location>
        <begin position="177"/>
        <end position="179"/>
    </location>
</feature>
<feature type="helix" evidence="25">
    <location>
        <begin position="187"/>
        <end position="199"/>
    </location>
</feature>
<feature type="strand" evidence="25">
    <location>
        <begin position="205"/>
        <end position="210"/>
    </location>
</feature>
<feature type="helix" evidence="25">
    <location>
        <begin position="233"/>
        <end position="241"/>
    </location>
</feature>
<feature type="strand" evidence="25">
    <location>
        <begin position="247"/>
        <end position="251"/>
    </location>
</feature>
<feature type="turn" evidence="25">
    <location>
        <begin position="254"/>
        <end position="256"/>
    </location>
</feature>
<feature type="helix" evidence="25">
    <location>
        <begin position="257"/>
        <end position="264"/>
    </location>
</feature>
<feature type="turn" evidence="25">
    <location>
        <begin position="265"/>
        <end position="269"/>
    </location>
</feature>
<feature type="strand" evidence="22">
    <location>
        <begin position="270"/>
        <end position="274"/>
    </location>
</feature>
<feature type="strand" evidence="25">
    <location>
        <begin position="276"/>
        <end position="281"/>
    </location>
</feature>
<feature type="strand" evidence="25">
    <location>
        <begin position="283"/>
        <end position="296"/>
    </location>
</feature>
<feature type="strand" evidence="25">
    <location>
        <begin position="300"/>
        <end position="305"/>
    </location>
</feature>
<feature type="helix" evidence="25">
    <location>
        <begin position="315"/>
        <end position="330"/>
    </location>
</feature>
<feature type="turn" evidence="24">
    <location>
        <begin position="332"/>
        <end position="334"/>
    </location>
</feature>
<feature type="helix" evidence="25">
    <location>
        <begin position="347"/>
        <end position="351"/>
    </location>
</feature>
<feature type="strand" evidence="25">
    <location>
        <begin position="354"/>
        <end position="364"/>
    </location>
</feature>
<feature type="turn" evidence="25">
    <location>
        <begin position="369"/>
        <end position="373"/>
    </location>
</feature>
<feature type="helix" evidence="25">
    <location>
        <begin position="378"/>
        <end position="398"/>
    </location>
</feature>
<feature type="helix" evidence="25">
    <location>
        <begin position="400"/>
        <end position="430"/>
    </location>
</feature>
<feature type="strand" evidence="25">
    <location>
        <begin position="436"/>
        <end position="438"/>
    </location>
</feature>
<feature type="turn" evidence="25">
    <location>
        <begin position="439"/>
        <end position="441"/>
    </location>
</feature>
<feature type="helix" evidence="20">
    <location>
        <begin position="450"/>
        <end position="452"/>
    </location>
</feature>
<feature type="strand" evidence="20">
    <location>
        <begin position="453"/>
        <end position="462"/>
    </location>
</feature>
<feature type="helix" evidence="24">
    <location>
        <begin position="464"/>
        <end position="470"/>
    </location>
</feature>
<feature type="strand" evidence="20">
    <location>
        <begin position="475"/>
        <end position="481"/>
    </location>
</feature>
<feature type="turn" evidence="23">
    <location>
        <begin position="488"/>
        <end position="490"/>
    </location>
</feature>
<feature type="helix" evidence="20">
    <location>
        <begin position="493"/>
        <end position="496"/>
    </location>
</feature>
<feature type="helix" evidence="20">
    <location>
        <begin position="500"/>
        <end position="509"/>
    </location>
</feature>
<feature type="helix" evidence="20">
    <location>
        <begin position="514"/>
        <end position="516"/>
    </location>
</feature>
<feature type="helix" evidence="20">
    <location>
        <begin position="519"/>
        <end position="521"/>
    </location>
</feature>
<feature type="strand" evidence="20">
    <location>
        <begin position="525"/>
        <end position="530"/>
    </location>
</feature>
<feature type="helix" evidence="20">
    <location>
        <begin position="535"/>
        <end position="551"/>
    </location>
</feature>
<feature type="helix" evidence="20">
    <location>
        <begin position="554"/>
        <end position="557"/>
    </location>
</feature>
<feature type="strand" evidence="20">
    <location>
        <begin position="561"/>
        <end position="564"/>
    </location>
</feature>
<feature type="strand" evidence="20">
    <location>
        <begin position="568"/>
        <end position="571"/>
    </location>
</feature>
<feature type="strand" evidence="23">
    <location>
        <begin position="573"/>
        <end position="576"/>
    </location>
</feature>
<feature type="strand" evidence="20">
    <location>
        <begin position="579"/>
        <end position="583"/>
    </location>
</feature>
<feature type="helix" evidence="20">
    <location>
        <begin position="584"/>
        <end position="597"/>
    </location>
</feature>
<feature type="turn" evidence="20">
    <location>
        <begin position="603"/>
        <end position="605"/>
    </location>
</feature>
<feature type="strand" evidence="20">
    <location>
        <begin position="606"/>
        <end position="609"/>
    </location>
</feature>
<feature type="helix" evidence="20">
    <location>
        <begin position="613"/>
        <end position="615"/>
    </location>
</feature>
<feature type="helix" evidence="20">
    <location>
        <begin position="618"/>
        <end position="625"/>
    </location>
</feature>
<feature type="turn" evidence="20">
    <location>
        <begin position="628"/>
        <end position="630"/>
    </location>
</feature>
<feature type="strand" evidence="20">
    <location>
        <begin position="633"/>
        <end position="635"/>
    </location>
</feature>
<feature type="helix" evidence="20">
    <location>
        <begin position="638"/>
        <end position="653"/>
    </location>
</feature>
<feature type="helix" evidence="23">
    <location>
        <begin position="656"/>
        <end position="666"/>
    </location>
</feature>
<feature type="helix" evidence="23">
    <location>
        <begin position="667"/>
        <end position="672"/>
    </location>
</feature>
<keyword id="KW-0002">3D-structure</keyword>
<keyword id="KW-0046">Antibiotic resistance</keyword>
<keyword id="KW-0067">ATP-binding</keyword>
<keyword id="KW-0963">Cytoplasm</keyword>
<keyword id="KW-0238">DNA-binding</keyword>
<keyword id="KW-0413">Isomerase</keyword>
<keyword id="KW-0460">Magnesium</keyword>
<keyword id="KW-0479">Metal-binding</keyword>
<keyword id="KW-0547">Nucleotide-binding</keyword>
<keyword id="KW-1185">Reference proteome</keyword>
<keyword id="KW-0799">Topoisomerase</keyword>
<name>GYRB_MYCTU</name>
<comment type="function">
    <text evidence="2 3 4 5 6 7 8 9 10 12 13">A type II topoisomerase that negatively supercoils closed circular double-stranded (ds) DNA in an ATP-dependent manner to maintain chromosomes in an underwound state, while in the absence of ATP it relaxes supercoiled dsDNA (PubMed:15047530, PubMed:16377674, PubMed:16876125, PubMed:18426901, PubMed:19060136, PubMed:19596812, PubMed:20805881, PubMed:22844097). Also catalyzes the interconversion of other topological isomers of dsDNA rings, including catenanes (PubMed:16876125, PubMed:19060136, PubMed:22457352). Gyrase from M.tuberculosis has higher decatenation than supercoiling activity compared to E.coli; as M.tuberculosis only has 1 type II topoisomerase, gyrase has to fulfill the decatenation function of topoisomerase IV as well (PubMed:16876125, PubMed:22457352, PubMed:23869946). At comparable concentrations M.tuberculosis gyrase cannot introduce as many negative supercoils into DNA as the E.coli enzyme, and its ATPase activity is lower, perhaps because it does not couple DNA wrapping and ATP binding as well as E.coli (PubMed:22457352, PubMed:24015710).</text>
</comment>
<comment type="function">
    <text>Negative supercoiling favors strand separation, and DNA replication, transcription, recombination and repair, all of which involve strand separation. Type II topoisomerases break and join 2 DNA strands simultaneously in an ATP-dependent manner.</text>
</comment>
<comment type="catalytic activity">
    <reaction evidence="1 2 4">
        <text>ATP-dependent breakage, passage and rejoining of double-stranded DNA.</text>
        <dbReference type="EC" id="5.6.2.2"/>
    </reaction>
</comment>
<comment type="cofactor">
    <cofactor evidence="1 4 13">
        <name>Mg(2+)</name>
        <dbReference type="ChEBI" id="CHEBI:18420"/>
    </cofactor>
    <cofactor evidence="1">
        <name>Mn(2+)</name>
        <dbReference type="ChEBI" id="CHEBI:29035"/>
    </cofactor>
    <text evidence="4 10">Mg(2+) required for DNA supercoiling, DNA relaxation, DNA cleavage and DNA decatenation, Mn(2+) substitutes for relaxation but not supercoiling or cleavage activity (PubMed:16876125). Ca(2+) does not substitute for supercoiling activity (PubMed:22844097).</text>
</comment>
<comment type="activity regulation">
    <text evidence="2 4 6 11 12 14">DNA supercoiling inhibited by (fluoro)quinoline antibiotics such as sparfloxacin and levofloxacin, which usually act on GyrA subunit (PubMed:15047530). DNA supercoiling inhibited by the coumarin antibiotic novobiocin which acts on GyrB (PubMed:16876125). Quinolones lead to gyrase-mediated dsDNA cleavage while preventing reclosure (PubMed:15047530, PubMed:16876125, PubMed:23869946). DNA supercoiling activity inhibited by aminopyrazinamide and pyrrolamide derivatives, probably via effects on the GyrB subunit (PubMed:23268609, PubMed:24126580). DNA relaxation inhibited by ATP and its analogs (PubMed:16876125). DNA supercoiling, relaxation, decatenation and quinolone-promoted DNA cleavage are inhibited by MfpA (50% inhibition occurs at 2 uM), inhibition of gyrase activities is enhanced in a concentration-dependent manner by MfpA (PubMed:19060136).</text>
</comment>
<comment type="subunit">
    <text evidence="1 2">Heterotetramer, composed of two GyrA and two GyrB chains (PubMed:15047530). In the heterotetramer, GyrA contains the active site tyrosine that forms a transient covalent intermediate with DNA, while GyrB binds cofactors and catalyzes ATP hydrolysis.</text>
</comment>
<comment type="subcellular location">
    <subcellularLocation>
        <location evidence="1">Cytoplasm</location>
    </subcellularLocation>
</comment>
<comment type="domain">
    <text evidence="7 8">The B' domain (residues 448-675, Toprim plus a tail domain) forms a dimer; when reconstituted with intact GyrA the complex has ATP-independent DNA relaxation activity (PubMed:19596812). The same fragment (also called TopBK) when reconstituted with intact GyrA or the N-terminus of GyrA (residues 1-502) can catalyze quinolone-mediated DNA breaks (PubMed:20805881).</text>
</comment>
<comment type="miscellaneous">
    <text evidence="5 16 17 18 19">When the enzyme transiently cleaves DNA a phosphotyrosine bond is formed between GyrA and DNA (PubMed:15047530). In the presence of quinolones this intermediate can be trapped and is used as an indicator of drug toxicity (PubMed:16377674, PubMed:16876125, PubMed:23869946). DNA gyrase is intrinsically more resistant to fluoroquinolone drugs than in E.coli, mutating it to resemble E.coli increases its susceptibility to fluoroquinolones (most quinolone-resistant mutations are in the GyrA subunit) (PubMed:18426901).</text>
</comment>
<comment type="miscellaneous">
    <text evidence="4 12">Gyrase from M.tuberculosis is usually assayed in the presence of potassium glutamate (KGlu); KGlu stimulates supercoiling but inhibits DNA relaxation activity, and has concentration-dependent effects on GyrA-box mutants (PubMed:16876125, PubMed:23869946).</text>
</comment>
<comment type="miscellaneous">
    <text evidence="1">Few gyrases are as efficient as E.coli at forming negative supercoils. Not all organisms have 2 type II topoisomerases; in organisms with a single type II topoisomerase this enzyme also has to decatenate newly replicated chromosomes.</text>
</comment>
<comment type="similarity">
    <text evidence="1">Belongs to the type II topoisomerase GyrB family.</text>
</comment>
<comment type="sequence caution" evidence="15">
    <conflict type="erroneous initiation">
        <sequence resource="EMBL-CDS" id="AAA83016"/>
    </conflict>
    <text>Extended N-terminus.</text>
</comment>
<accession>P9WG45</accession>
<accession>L0T585</accession>
<accession>P0C5C5</accession>
<accession>P41514</accession>
<accession>P77897</accession>
<reference key="1">
    <citation type="journal article" date="1994" name="Antimicrob. Agents Chemother.">
        <title>Cloning and nucleotide sequence of Mycobacterium tuberculosis gyrA and gyrB genes and detection of quinolone resistance mutations.</title>
        <authorList>
            <person name="Takiff H.E."/>
            <person name="Salazar L."/>
            <person name="Guerrero C."/>
            <person name="Philipp W."/>
            <person name="Huang W.M."/>
            <person name="Kreiswirth B."/>
            <person name="Cole S.T."/>
            <person name="Jacobs W.R. Jr."/>
            <person name="Telenti A."/>
        </authorList>
    </citation>
    <scope>NUCLEOTIDE SEQUENCE [GENOMIC DNA]</scope>
    <source>
        <strain>ATCC 25618 / H37Rv</strain>
    </source>
</reference>
<reference key="2">
    <citation type="submission" date="1995-12" db="EMBL/GenBank/DDBJ databases">
        <authorList>
            <person name="Telenti A."/>
        </authorList>
    </citation>
    <scope>SEQUENCE REVISION TO 513-518</scope>
</reference>
<reference key="3">
    <citation type="journal article" date="1998" name="Nature">
        <title>Deciphering the biology of Mycobacterium tuberculosis from the complete genome sequence.</title>
        <authorList>
            <person name="Cole S.T."/>
            <person name="Brosch R."/>
            <person name="Parkhill J."/>
            <person name="Garnier T."/>
            <person name="Churcher C.M."/>
            <person name="Harris D.E."/>
            <person name="Gordon S.V."/>
            <person name="Eiglmeier K."/>
            <person name="Gas S."/>
            <person name="Barry C.E. III"/>
            <person name="Tekaia F."/>
            <person name="Badcock K."/>
            <person name="Basham D."/>
            <person name="Brown D."/>
            <person name="Chillingworth T."/>
            <person name="Connor R."/>
            <person name="Davies R.M."/>
            <person name="Devlin K."/>
            <person name="Feltwell T."/>
            <person name="Gentles S."/>
            <person name="Hamlin N."/>
            <person name="Holroyd S."/>
            <person name="Hornsby T."/>
            <person name="Jagels K."/>
            <person name="Krogh A."/>
            <person name="McLean J."/>
            <person name="Moule S."/>
            <person name="Murphy L.D."/>
            <person name="Oliver S."/>
            <person name="Osborne J."/>
            <person name="Quail M.A."/>
            <person name="Rajandream M.A."/>
            <person name="Rogers J."/>
            <person name="Rutter S."/>
            <person name="Seeger K."/>
            <person name="Skelton S."/>
            <person name="Squares S."/>
            <person name="Squares R."/>
            <person name="Sulston J.E."/>
            <person name="Taylor K."/>
            <person name="Whitehead S."/>
            <person name="Barrell B.G."/>
        </authorList>
    </citation>
    <scope>NUCLEOTIDE SEQUENCE [LARGE SCALE GENOMIC DNA]</scope>
    <source>
        <strain>ATCC 25618 / H37Rv</strain>
    </source>
</reference>
<reference key="4">
    <citation type="journal article" date="2004" name="Antimicrob. Agents Chemother.">
        <title>Mycobacterium tuberculosis DNA gyrase: interaction with quinolones and correlation with antimycobacterial drug activity.</title>
        <authorList>
            <person name="Aubry A."/>
            <person name="Pan X.S."/>
            <person name="Fisher L.M."/>
            <person name="Jarlier V."/>
            <person name="Cambau E."/>
        </authorList>
    </citation>
    <scope>FUNCTION</scope>
    <scope>CATALYTIC ACTIVITY</scope>
    <scope>ACTIVITY REGULATION</scope>
    <scope>SUBUNIT</scope>
    <scope>REACTION MECHANISM</scope>
    <source>
        <strain>ATCC 25618 / H37Rv</strain>
    </source>
</reference>
<reference key="5">
    <citation type="journal article" date="2006" name="Antimicrob. Agents Chemother.">
        <title>Novel gyrase mutations in quinolone-resistant and -hypersusceptible clinical isolates of Mycobacterium tuberculosis: functional analysis of mutant enzymes.</title>
        <authorList>
            <person name="Aubry A."/>
            <person name="Veziris N."/>
            <person name="Cambau E."/>
            <person name="Truffot-Pernot C."/>
            <person name="Jarlier V."/>
            <person name="Fisher L.M."/>
        </authorList>
    </citation>
    <scope>FUNCTION</scope>
    <scope>MUTAGENESIS OF ASP-472 AND ASN-499</scope>
    <scope>ANTIBIOTIC RESISTANCE</scope>
    <source>
        <strain>H37Rv</strain>
    </source>
</reference>
<reference key="6">
    <citation type="journal article" date="2006" name="Biochem. Biophys. Res. Commun.">
        <title>First functional characterization of a singly expressed bacterial type II topoisomerase: the enzyme from Mycobacterium tuberculosis.</title>
        <authorList>
            <person name="Aubry A."/>
            <person name="Fisher L.M."/>
            <person name="Jarlier V."/>
            <person name="Cambau E."/>
        </authorList>
    </citation>
    <scope>FUNCTION</scope>
    <scope>CATALYTIC ACTIVITY</scope>
    <scope>COFACTOR</scope>
    <scope>ACTIVITY REGULATION</scope>
    <source>
        <strain>H37Rv</strain>
    </source>
</reference>
<reference key="7">
    <citation type="journal article" date="2008" name="Antimicrob. Agents Chemother.">
        <title>Mutagenesis in the alpha3alpha4 GyrA helix and in the Toprim domain of GyrB refines the contribution of Mycobacterium tuberculosis DNA gyrase to intrinsic resistance to quinolones.</title>
        <authorList>
            <person name="Matrat S."/>
            <person name="Aubry A."/>
            <person name="Mayer C."/>
            <person name="Jarlier V."/>
            <person name="Cambau E."/>
        </authorList>
    </citation>
    <scope>FUNCTION</scope>
    <scope>MUTAGENESIS OF ARG-482</scope>
    <scope>ANTIBIOTIC SUSCEPTIBILITY</scope>
</reference>
<reference key="8">
    <citation type="journal article" date="2009" name="J. Bacteriol.">
        <title>The pentapeptide repeat proteins MfpAMt and QnrB4 exhibit opposite effects on DNA gyrase catalytic reactions and on the ternary gyrase-DNA-quinolone complex.</title>
        <authorList>
            <person name="Merens A."/>
            <person name="Matrat S."/>
            <person name="Aubry A."/>
            <person name="Lascols C."/>
            <person name="Jarlier V."/>
            <person name="Soussy C.J."/>
            <person name="Cavallo J.D."/>
            <person name="Cambau E."/>
        </authorList>
    </citation>
    <scope>FUNCTION</scope>
    <scope>ACTIVITY REGULATION</scope>
    <source>
        <strain>H37Rv</strain>
    </source>
</reference>
<reference key="9">
    <citation type="journal article" date="2011" name="Mol. Cell. Proteomics">
        <title>Proteogenomic analysis of Mycobacterium tuberculosis by high resolution mass spectrometry.</title>
        <authorList>
            <person name="Kelkar D.S."/>
            <person name="Kumar D."/>
            <person name="Kumar P."/>
            <person name="Balakrishnan L."/>
            <person name="Muthusamy B."/>
            <person name="Yadav A.K."/>
            <person name="Shrivastava P."/>
            <person name="Marimuthu A."/>
            <person name="Anand S."/>
            <person name="Sundaram H."/>
            <person name="Kingsbury R."/>
            <person name="Harsha H.C."/>
            <person name="Nair B."/>
            <person name="Prasad T.S."/>
            <person name="Chauhan D.S."/>
            <person name="Katoch K."/>
            <person name="Katoch V.M."/>
            <person name="Kumar P."/>
            <person name="Chaerkady R."/>
            <person name="Ramachandran S."/>
            <person name="Dash D."/>
            <person name="Pandey A."/>
        </authorList>
    </citation>
    <scope>IDENTIFICATION BY MASS SPECTROMETRY [LARGE SCALE ANALYSIS]</scope>
    <source>
        <strain>ATCC 25618 / H37Rv</strain>
    </source>
</reference>
<reference key="10">
    <citation type="journal article" date="2012" name="J. Biol. Chem.">
        <title>Mechanisms for defining supercoiling set point of DNA gyrase orthologs: II. The shape of the GyrA subunit C-terminal domain (CTD) is not a sole determinant for controlling supercoiling efficiency.</title>
        <authorList>
            <person name="Tretter E.M."/>
            <person name="Berger J.M."/>
        </authorList>
    </citation>
    <scope>FUNCTION</scope>
    <source>
        <strain>ATCC 25618 / H37Rv</strain>
    </source>
</reference>
<reference key="11">
    <citation type="journal article" date="2012" name="Nucleic Acids Res.">
        <title>The role of Ca(2+) in the activity of Mycobacterium tuberculosis DNA gyrase.</title>
        <authorList>
            <person name="Karkare S."/>
            <person name="Yousafzai F."/>
            <person name="Mitchenall L.A."/>
            <person name="Maxwell A."/>
        </authorList>
    </citation>
    <scope>FUNCTION</scope>
    <scope>COFACTOR</scope>
</reference>
<reference key="12">
    <citation type="journal article" date="2013" name="ACS Chem. Biol.">
        <title>Aminopyrazinamides: novel and specific GyrB inhibitors that kill replicating and nonreplicating Mycobacterium tuberculosis.</title>
        <authorList>
            <person name="Shirude P.S."/>
            <person name="Madhavapeddi P."/>
            <person name="Tucker J.A."/>
            <person name="Murugan K."/>
            <person name="Patil V."/>
            <person name="Basavarajappa H."/>
            <person name="Raichurkar A.V."/>
            <person name="Humnabadkar V."/>
            <person name="Hussein S."/>
            <person name="Sharma S."/>
            <person name="Ramya V.K."/>
            <person name="Narayan C.B."/>
            <person name="Balganesh T.S."/>
            <person name="Sambandamurthy V.K."/>
        </authorList>
    </citation>
    <scope>ACTIVITY REGULATION</scope>
    <scope>MUTAGENESIS OF GLY-157</scope>
    <scope>ANTIBIOTIC RESISTANCE</scope>
    <source>
        <strain>H37Rv</strain>
    </source>
</reference>
<reference key="13">
    <citation type="journal article" date="2013" name="Biochem. J.">
        <title>Mycobacterium tuberculosis DNA gyrase possesses two functional GyrA-boxes.</title>
        <authorList>
            <person name="Bouige A."/>
            <person name="Darmon A."/>
            <person name="Piton J."/>
            <person name="Roue M."/>
            <person name="Petrella S."/>
            <person name="Capton E."/>
            <person name="Forterre P."/>
            <person name="Aubry A."/>
            <person name="Mayer C."/>
        </authorList>
    </citation>
    <scope>FUNCTION</scope>
    <source>
        <strain>H37Rv</strain>
    </source>
</reference>
<reference key="14">
    <citation type="journal article" date="2014" name="Antimicrob. Agents Chemother.">
        <title>Optimization of pyrrolamides as mycobacterial GyrB ATPase inhibitors: structure-activity relationship and in vivo efficacy in a mouse model of tuberculosis.</title>
        <authorList>
            <person name="P S.H."/>
            <person name="Solapure S."/>
            <person name="Mukherjee K."/>
            <person name="Nandi V."/>
            <person name="Waterson D."/>
            <person name="Shandil R."/>
            <person name="Balganesh M."/>
            <person name="Sambandamurthy V.K."/>
            <person name="Raichurkar A.K."/>
            <person name="Deshpande A."/>
            <person name="Ghosh A."/>
            <person name="Awasthy D."/>
            <person name="Shanbhag G."/>
            <person name="Sheikh G."/>
            <person name="McMiken H."/>
            <person name="Puttur J."/>
            <person name="Reddy J."/>
            <person name="Werngren J."/>
            <person name="Read J."/>
            <person name="Kumar M."/>
            <person name="R M."/>
            <person name="Chinnapattu M."/>
            <person name="Madhavapeddi P."/>
            <person name="Manjrekar P."/>
            <person name="Basu R."/>
            <person name="Gaonkar S."/>
            <person name="Sharma S."/>
            <person name="Hoffner S."/>
            <person name="Humnabadkar V."/>
            <person name="Subbulakshmi V."/>
            <person name="Panduga V."/>
        </authorList>
    </citation>
    <scope>ACTIVITY REGULATION</scope>
    <scope>MUTAGENESIS OF SER-169</scope>
    <source>
        <strain>ATCC 27294 / TMC 102 / H37Rv</strain>
    </source>
</reference>
<reference key="15">
    <citation type="journal article" date="2009" name="Nucleic Acids Res.">
        <title>Crystal structure of DNA gyrase B' domain sheds lights on the mechanism for T-segment navigation.</title>
        <authorList>
            <person name="Fu G."/>
            <person name="Wu J."/>
            <person name="Liu W."/>
            <person name="Zhu D."/>
            <person name="Hu Y."/>
            <person name="Deng J."/>
            <person name="Zhang X.E."/>
            <person name="Bi L."/>
            <person name="Wang D.C."/>
        </authorList>
    </citation>
    <scope>X-RAY CRYSTALLOGRAPHY (2.80 ANGSTROMS) OF 448-675</scope>
    <scope>FUNCTION</scope>
    <scope>DOMAIN</scope>
    <scope>MUTAGENESIS OF ASP-577; 620-GLU--ASP-627; GLU-620; GLU-623 AND ASP-627</scope>
</reference>
<reference key="16">
    <citation type="journal article" date="2010" name="PLoS ONE">
        <title>Structural insights into the quinolone resistance mechanism of Mycobacterium tuberculosis DNA gyrase.</title>
        <authorList>
            <person name="Piton J."/>
            <person name="Petrella S."/>
            <person name="Delarue M."/>
            <person name="Andre-Leroux G."/>
            <person name="Jarlier V."/>
            <person name="Aubry A."/>
            <person name="Mayer C."/>
        </authorList>
    </citation>
    <scope>X-RAY CRYSTALLOGRAPHY (1.95 ANGSTROMS) OF 448-675</scope>
    <scope>FUNCTION</scope>
    <scope>DOMAIN</scope>
</reference>
<reference key="17">
    <citation type="journal article" date="2013" name="Biochem. J.">
        <title>Mycobacterium tuberculosis DNA gyrase ATPase domain structures suggest a dissociative mechanism that explains how ATP hydrolysis is coupled to domain motion.</title>
        <authorList>
            <person name="Agrawal A."/>
            <person name="Roue M."/>
            <person name="Spitzfaden C."/>
            <person name="Petrella S."/>
            <person name="Aubry A."/>
            <person name="Hann M."/>
            <person name="Bax B."/>
            <person name="Mayer C."/>
        </authorList>
    </citation>
    <scope>X-RAY CRYSTALLOGRAPHY (2.90 ANGSTROMS) OF 2-427 IN COMPLEX WITH ATP ANALOGS AND MAGNESIUM</scope>
    <scope>FUNCTION</scope>
    <scope>ATP-BINDING</scope>
    <source>
        <strain>H37Rv</strain>
    </source>
</reference>
<evidence type="ECO:0000255" key="1">
    <source>
        <dbReference type="HAMAP-Rule" id="MF_01898"/>
    </source>
</evidence>
<evidence type="ECO:0000269" key="2">
    <source>
    </source>
</evidence>
<evidence type="ECO:0000269" key="3">
    <source>
    </source>
</evidence>
<evidence type="ECO:0000269" key="4">
    <source>
    </source>
</evidence>
<evidence type="ECO:0000269" key="5">
    <source>
    </source>
</evidence>
<evidence type="ECO:0000269" key="6">
    <source>
    </source>
</evidence>
<evidence type="ECO:0000269" key="7">
    <source>
    </source>
</evidence>
<evidence type="ECO:0000269" key="8">
    <source>
    </source>
</evidence>
<evidence type="ECO:0000269" key="9">
    <source>
    </source>
</evidence>
<evidence type="ECO:0000269" key="10">
    <source>
    </source>
</evidence>
<evidence type="ECO:0000269" key="11">
    <source>
    </source>
</evidence>
<evidence type="ECO:0000269" key="12">
    <source>
    </source>
</evidence>
<evidence type="ECO:0000269" key="13">
    <source>
    </source>
</evidence>
<evidence type="ECO:0000269" key="14">
    <source>
    </source>
</evidence>
<evidence type="ECO:0000305" key="15"/>
<evidence type="ECO:0000305" key="16">
    <source>
    </source>
</evidence>
<evidence type="ECO:0000305" key="17">
    <source>
    </source>
</evidence>
<evidence type="ECO:0000305" key="18">
    <source>
    </source>
</evidence>
<evidence type="ECO:0000305" key="19">
    <source>
    </source>
</evidence>
<evidence type="ECO:0007829" key="20">
    <source>
        <dbReference type="PDB" id="3M4I"/>
    </source>
</evidence>
<evidence type="ECO:0007829" key="21">
    <source>
        <dbReference type="PDB" id="3ZKB"/>
    </source>
</evidence>
<evidence type="ECO:0007829" key="22">
    <source>
        <dbReference type="PDB" id="3ZKD"/>
    </source>
</evidence>
<evidence type="ECO:0007829" key="23">
    <source>
        <dbReference type="PDB" id="5BS8"/>
    </source>
</evidence>
<evidence type="ECO:0007829" key="24">
    <source>
        <dbReference type="PDB" id="6GAU"/>
    </source>
</evidence>
<evidence type="ECO:0007829" key="25">
    <source>
        <dbReference type="PDB" id="6GAV"/>
    </source>
</evidence>
<proteinExistence type="evidence at protein level"/>
<protein>
    <recommendedName>
        <fullName evidence="1">DNA gyrase subunit B</fullName>
        <ecNumber evidence="1 2 4">5.6.2.2</ecNumber>
    </recommendedName>
</protein>
<gene>
    <name evidence="1" type="primary">gyrB</name>
    <name type="ordered locus">Rv0005</name>
    <name type="ORF">MTCY10H4.03</name>
</gene>
<sequence length="675" mass="74091">MAAQKKKAQDEYGAASITILEGLEAVRKRPGMYIGSTGERGLHHLIWEVVDNAVDEAMAGYATTVNVVLLEDGGVEVADDGRGIPVATHASGIPTVDVVMTQLHAGGKFDSDAYAISGGLHGVGVSVVNALSTRLEVEIKRDGYEWSQVYEKSEPLGLKQGAPTKKTGSTVRFWADPAVFETTEYDFETVARRLQEMAFLNKGLTINLTDERVTQDEVVDEVVSDVAEAPKSASERAAESTAPHKVKSRTFHYPGGLVDFVKHINRTKNAIHSSIVDFSGKGTGHEVEIAMQWNAGYSESVHTFANTINTHEGGTHEEGFRSALTSVVNKYAKDRKLLKDKDPNLTGDDIREGLAAVISVKVSEPQFEGQTKTKLGNTEVKSFVQKVCNEQLTHWFEANPTDAKVVVNKAVSSAQARIAARKARELVRRKSATDIGGLPGKLADCRSTDPRKSELYVVEGDSAGGSAKSGRDSMFQAILPLRGKIINVEKARIDRVLKNTEVQAIITALGTGIHDEFDIGKLRYHKIVLMADADVDGQHISTLLLTLLFRFMRPLIENGHVFLAQPPLYKLKWQRSDPEFAYSDRERDGLLEAGLKAGKKINKEDGIQRYKGLGEMDAKELWETTMDPSVRVLRQVTLDDAAAADELFSILMGEDVDARRSFITRNAKDVRFLDV</sequence>